<comment type="function">
    <text evidence="1 2">C-mannosyltransferase that mediates C-mannosylation of tryptophan residues on target proteins. The reaction occurs on the luminal side of the endoplasmic reticulum and involves the transfer of a mannose unit from a dolichylphosphate mannose (Dol-P-Man) donor to an acceptor protein containing a WxxW or WxxC consensus sequence. C-mannosylates RSPO1, a Wnt signaling regulator, preferentially at the first Trp residue in the sequence WxxW (By similarity). C-mannosylates the netrin receptor UNC5A, preferentially at the third tryptophan of WxxWxxWxxC sequence (By similarity).</text>
</comment>
<comment type="catalytic activity">
    <reaction evidence="1">
        <text>L-tryptophyl-[protein] + a di-trans,poly-cis-dolichyl beta-D-mannosyl phosphate = C-alpha-D-mannosyl-L-tryptophyl-[protein] + a di-trans,poly-cis-dolichyl phosphate + H(+)</text>
        <dbReference type="Rhea" id="RHEA:77219"/>
        <dbReference type="Rhea" id="RHEA-COMP:15365"/>
        <dbReference type="Rhea" id="RHEA-COMP:18864"/>
        <dbReference type="Rhea" id="RHEA-COMP:19498"/>
        <dbReference type="Rhea" id="RHEA-COMP:19501"/>
        <dbReference type="ChEBI" id="CHEBI:15378"/>
        <dbReference type="ChEBI" id="CHEBI:29954"/>
        <dbReference type="ChEBI" id="CHEBI:57683"/>
        <dbReference type="ChEBI" id="CHEBI:58211"/>
        <dbReference type="ChEBI" id="CHEBI:195646"/>
    </reaction>
    <physiologicalReaction direction="left-to-right" evidence="1">
        <dbReference type="Rhea" id="RHEA:77220"/>
    </physiologicalReaction>
</comment>
<comment type="pathway">
    <text evidence="1">Protein modification; protein glycosylation.</text>
</comment>
<comment type="subcellular location">
    <subcellularLocation>
        <location evidence="1">Endoplasmic reticulum membrane</location>
        <topology evidence="1">Multi-pass membrane protein</topology>
    </subcellularLocation>
</comment>
<comment type="alternative products">
    <event type="alternative splicing"/>
    <isoform>
        <id>Q5RCJ4-1</id>
        <name>1</name>
        <sequence type="displayed"/>
    </isoform>
    <isoform>
        <id>Q5RCJ4-2</id>
        <name>2</name>
        <sequence type="described" ref="VSP_062230 VSP_062231"/>
    </isoform>
</comment>
<comment type="domain">
    <text evidence="1">The C-terminal luminal region is essential for C-mannosyltransferase activity.</text>
</comment>
<comment type="similarity">
    <text evidence="4">Belongs to the dpy-19 family.</text>
</comment>
<evidence type="ECO:0000250" key="1">
    <source>
        <dbReference type="UniProtKB" id="Q6ZPD9"/>
    </source>
</evidence>
<evidence type="ECO:0000250" key="2">
    <source>
        <dbReference type="UniProtKB" id="Q71B07"/>
    </source>
</evidence>
<evidence type="ECO:0000255" key="3"/>
<evidence type="ECO:0000305" key="4"/>
<proteinExistence type="evidence at transcript level"/>
<gene>
    <name type="primary">DPY19L3</name>
</gene>
<organism>
    <name type="scientific">Pongo abelii</name>
    <name type="common">Sumatran orangutan</name>
    <name type="synonym">Pongo pygmaeus abelii</name>
    <dbReference type="NCBI Taxonomy" id="9601"/>
    <lineage>
        <taxon>Eukaryota</taxon>
        <taxon>Metazoa</taxon>
        <taxon>Chordata</taxon>
        <taxon>Craniata</taxon>
        <taxon>Vertebrata</taxon>
        <taxon>Euteleostomi</taxon>
        <taxon>Mammalia</taxon>
        <taxon>Eutheria</taxon>
        <taxon>Euarchontoglires</taxon>
        <taxon>Primates</taxon>
        <taxon>Haplorrhini</taxon>
        <taxon>Catarrhini</taxon>
        <taxon>Hominidae</taxon>
        <taxon>Pongo</taxon>
    </lineage>
</organism>
<name>D19L3_PONAB</name>
<keyword id="KW-0025">Alternative splicing</keyword>
<keyword id="KW-0256">Endoplasmic reticulum</keyword>
<keyword id="KW-0325">Glycoprotein</keyword>
<keyword id="KW-0328">Glycosyltransferase</keyword>
<keyword id="KW-0472">Membrane</keyword>
<keyword id="KW-1185">Reference proteome</keyword>
<keyword id="KW-0808">Transferase</keyword>
<keyword id="KW-0812">Transmembrane</keyword>
<keyword id="KW-1133">Transmembrane helix</keyword>
<protein>
    <recommendedName>
        <fullName>Protein C-mannosyl-transferase DPY19L3</fullName>
        <ecNumber evidence="1">2.4.1.-</ecNumber>
    </recommendedName>
    <alternativeName>
        <fullName>Dpy-19-like protein 3</fullName>
    </alternativeName>
    <alternativeName>
        <fullName>Protein dpy-19 homolog 3</fullName>
    </alternativeName>
</protein>
<sequence length="716" mass="83209">MMSIRQRREIRATEVSEDFPAQEENVKLENKLPSGCTSRRLWKILSLTIGGTIALCIGLLTSVYLATLHENDLWFSNIKEVEREISFRTECGLYYSYYKQMLQAPTLVQGFYGLIYDNKTESMKTINLLQRMNIYQEVFLSILYRVLPVQKYLEPVYFYIYTLFGLQAIYVTALYITSWLLSGTWLSGLLAAFWYVTNRIDTTRVEFTIPLRENWALPFFAIQIAAITYFLRPNLQPLSERLTLLAIFISTFLFSLTWQFNQFMMLMQALVLFTLDSLDMLPAVKATWLYGIQITSLLLVCILQFFNSMILGSLLISFNLSVFIARKLQKNLKTGSFLNRLGKLLLHLFMVLCLTLFLNNIIKKILNLKSDEHIFKFLKAKFGLGATRDFDANLYLCEEAFGLLPFNTFGRLSDTLLFYAYIFVLSITVIVAFVVAFHNLSDSTNQQSVGKMEKGTVDLKPETAYNLIHTILFGFLALSTMRMKYLWTSHMCVFASFGLCSPEIWELLLKSVHLYNPKRICIMRYSVPILILLYLCYKFWPGMMDELSELREFYDPDTVELMNWINSNTPRKAVFAGSMQLLAGVKLCTGRTLTNHPHYEDSSLRERTRAVYQIYAKRAPEEVHALLRSFGTDYVILEDSICYERRHRRGCRLRDLLDIANGHMMDGPGENDPDLKPADHPRFCEEIKRNLPPYVAYFTRVFQNKTFHVYKLSRNK</sequence>
<dbReference type="EC" id="2.4.1.-" evidence="1"/>
<dbReference type="EMBL" id="CR858276">
    <property type="protein sequence ID" value="CAH90513.1"/>
    <property type="molecule type" value="mRNA"/>
</dbReference>
<dbReference type="EMBL" id="NDHI03003675">
    <property type="protein sequence ID" value="PNJ09261.1"/>
    <property type="molecule type" value="Genomic_DNA"/>
</dbReference>
<dbReference type="EMBL" id="NDHI03003675">
    <property type="protein sequence ID" value="PNJ09260.1"/>
    <property type="molecule type" value="Genomic_DNA"/>
</dbReference>
<dbReference type="RefSeq" id="NP_001125270.1">
    <property type="nucleotide sequence ID" value="NM_001131798.1"/>
</dbReference>
<dbReference type="SMR" id="Q5RCJ4"/>
<dbReference type="STRING" id="9601.ENSPPYP00000010991"/>
<dbReference type="Ensembl" id="ENSPPYT00000011420.2">
    <molecule id="Q5RCJ4-2"/>
    <property type="protein sequence ID" value="ENSPPYP00000010991.2"/>
    <property type="gene ID" value="ENSPPYG00000009816.3"/>
</dbReference>
<dbReference type="Ensembl" id="ENSPPYT00000041487.1">
    <molecule id="Q5RCJ4-1"/>
    <property type="protein sequence ID" value="ENSPPYP00000036985.1"/>
    <property type="gene ID" value="ENSPPYG00000009816.3"/>
</dbReference>
<dbReference type="GeneID" id="100172167"/>
<dbReference type="KEGG" id="pon:100172167"/>
<dbReference type="CTD" id="147991"/>
<dbReference type="eggNOG" id="KOG4587">
    <property type="taxonomic scope" value="Eukaryota"/>
</dbReference>
<dbReference type="GeneTree" id="ENSGT00530000063023"/>
<dbReference type="InParanoid" id="Q5RCJ4"/>
<dbReference type="OMA" id="HPHYENK"/>
<dbReference type="OrthoDB" id="6019623at2759"/>
<dbReference type="UniPathway" id="UPA00378"/>
<dbReference type="Proteomes" id="UP000001595">
    <property type="component" value="Chromosome 19"/>
</dbReference>
<dbReference type="GO" id="GO:0005789">
    <property type="term" value="C:endoplasmic reticulum membrane"/>
    <property type="evidence" value="ECO:0000250"/>
    <property type="project" value="UniProtKB"/>
</dbReference>
<dbReference type="GO" id="GO:0005637">
    <property type="term" value="C:nuclear inner membrane"/>
    <property type="evidence" value="ECO:0007669"/>
    <property type="project" value="TreeGrafter"/>
</dbReference>
<dbReference type="GO" id="GO:0000030">
    <property type="term" value="F:mannosyltransferase activity"/>
    <property type="evidence" value="ECO:0000250"/>
    <property type="project" value="UniProtKB"/>
</dbReference>
<dbReference type="GO" id="GO:0006486">
    <property type="term" value="P:protein glycosylation"/>
    <property type="evidence" value="ECO:0007669"/>
    <property type="project" value="UniProtKB-UniPathway"/>
</dbReference>
<dbReference type="CDD" id="cd20181">
    <property type="entry name" value="Dpy19L3"/>
    <property type="match status" value="1"/>
</dbReference>
<dbReference type="InterPro" id="IPR018732">
    <property type="entry name" value="Dpy-19/Dpy-19-like"/>
</dbReference>
<dbReference type="InterPro" id="IPR047465">
    <property type="entry name" value="Dpy19L3"/>
</dbReference>
<dbReference type="PANTHER" id="PTHR31488:SF4">
    <property type="entry name" value="C-MANNOSYLTRANSFERASE DPY19L3-RELATED"/>
    <property type="match status" value="1"/>
</dbReference>
<dbReference type="PANTHER" id="PTHR31488">
    <property type="entry name" value="DPY-19-LIKE 1, LIKE (H. SAPIENS)"/>
    <property type="match status" value="1"/>
</dbReference>
<dbReference type="Pfam" id="PF10034">
    <property type="entry name" value="Dpy19"/>
    <property type="match status" value="1"/>
</dbReference>
<accession>Q5RCJ4</accession>
<accession>A0A2J8RL51</accession>
<accession>A0A8I5TX92</accession>
<feature type="chain" id="PRO_0000311903" description="Protein C-mannosyl-transferase DPY19L3">
    <location>
        <begin position="1"/>
        <end position="716"/>
    </location>
</feature>
<feature type="topological domain" description="Cytoplasmic" evidence="1">
    <location>
        <begin position="1"/>
        <end position="43"/>
    </location>
</feature>
<feature type="transmembrane region" description="Helical; Name=1" evidence="3">
    <location>
        <begin position="44"/>
        <end position="64"/>
    </location>
</feature>
<feature type="topological domain" description="Lumenal" evidence="1">
    <location>
        <begin position="65"/>
        <end position="154"/>
    </location>
</feature>
<feature type="transmembrane region" description="Helical; Name=2" evidence="1">
    <location>
        <begin position="155"/>
        <end position="182"/>
    </location>
</feature>
<feature type="topological domain" description="Cytoplasmic" evidence="1">
    <location>
        <begin position="183"/>
        <end position="184"/>
    </location>
</feature>
<feature type="intramembrane region" description="Name=3" evidence="1">
    <location>
        <begin position="185"/>
        <end position="197"/>
    </location>
</feature>
<feature type="topological domain" description="Cytoplasmic" evidence="1">
    <location>
        <begin position="198"/>
        <end position="215"/>
    </location>
</feature>
<feature type="intramembrane region" description="Name=4" evidence="1">
    <location>
        <begin position="216"/>
        <end position="230"/>
    </location>
</feature>
<feature type="topological domain" description="Cytoplasmic" evidence="1">
    <location>
        <begin position="231"/>
        <end position="239"/>
    </location>
</feature>
<feature type="transmembrane region" description="Helical; Name=5" evidence="1">
    <location>
        <begin position="240"/>
        <end position="256"/>
    </location>
</feature>
<feature type="topological domain" description="Lumenal" evidence="1">
    <location>
        <begin position="257"/>
        <end position="262"/>
    </location>
</feature>
<feature type="transmembrane region" description="Helical; Name=6" evidence="1">
    <location>
        <begin position="263"/>
        <end position="279"/>
    </location>
</feature>
<feature type="topological domain" description="Cytoplasmic" evidence="1">
    <location>
        <begin position="280"/>
        <end position="289"/>
    </location>
</feature>
<feature type="transmembrane region" description="Helical; Name=7" evidence="1">
    <location>
        <begin position="290"/>
        <end position="306"/>
    </location>
</feature>
<feature type="topological domain" description="Lumenal" evidence="1">
    <location>
        <begin position="307"/>
        <end position="308"/>
    </location>
</feature>
<feature type="transmembrane region" description="Helical; Name=8" evidence="1">
    <location>
        <begin position="309"/>
        <end position="323"/>
    </location>
</feature>
<feature type="topological domain" description="Cytoplasmic" evidence="1">
    <location>
        <begin position="324"/>
        <end position="338"/>
    </location>
</feature>
<feature type="transmembrane region" description="Helical; Name=9" evidence="1">
    <location>
        <begin position="339"/>
        <end position="359"/>
    </location>
</feature>
<feature type="topological domain" description="Lumenal" evidence="1">
    <location>
        <begin position="360"/>
        <end position="414"/>
    </location>
</feature>
<feature type="transmembrane region" description="Helical; Name=10" evidence="1">
    <location>
        <begin position="415"/>
        <end position="437"/>
    </location>
</feature>
<feature type="topological domain" description="Cytoplasmic" evidence="1">
    <location>
        <begin position="438"/>
        <end position="465"/>
    </location>
</feature>
<feature type="transmembrane region" description="Helical; Name=11" evidence="1">
    <location>
        <begin position="466"/>
        <end position="485"/>
    </location>
</feature>
<feature type="topological domain" description="Lumenal" evidence="1">
    <location>
        <begin position="486"/>
        <end position="487"/>
    </location>
</feature>
<feature type="transmembrane region" description="Helical; Name=12" evidence="1">
    <location>
        <begin position="488"/>
        <end position="499"/>
    </location>
</feature>
<feature type="topological domain" description="Cytoplasmic" evidence="1 4">
    <location>
        <begin position="500"/>
        <end position="522"/>
    </location>
</feature>
<feature type="transmembrane region" description="Helical; Name=13" evidence="1">
    <location>
        <begin position="523"/>
        <end position="539"/>
    </location>
</feature>
<feature type="topological domain" description="Lumenal" evidence="1">
    <location>
        <begin position="540"/>
        <end position="716"/>
    </location>
</feature>
<feature type="glycosylation site" description="N-linked (GlcNAc...) asparagine" evidence="1">
    <location>
        <position position="118"/>
    </location>
</feature>
<feature type="glycosylation site" description="N-linked (GlcNAc...) asparagine" evidence="1">
    <location>
        <position position="704"/>
    </location>
</feature>
<feature type="splice variant" id="VSP_062230" description="In isoform 2.">
    <original>MMDGPGENDPDLKPADHPRFCEEIKRN</original>
    <variation>NPSLGTLVTATGAGQGRDDGWPRRERS</variation>
    <location>
        <begin position="664"/>
        <end position="690"/>
    </location>
</feature>
<feature type="splice variant" id="VSP_062231" description="In isoform 2.">
    <location>
        <begin position="691"/>
        <end position="716"/>
    </location>
</feature>
<feature type="sequence conflict" description="In Ref. 1; CAH90513." evidence="4" ref="1">
    <original>L</original>
    <variation>P</variation>
    <location>
        <position position="65"/>
    </location>
</feature>
<feature type="sequence conflict" description="In Ref. 1; CAH90513." evidence="4" ref="1">
    <original>C</original>
    <variation>R</variation>
    <location>
        <position position="397"/>
    </location>
</feature>
<reference key="1">
    <citation type="submission" date="2004-11" db="EMBL/GenBank/DDBJ databases">
        <authorList>
            <consortium name="The German cDNA consortium"/>
        </authorList>
    </citation>
    <scope>NUCLEOTIDE SEQUENCE [LARGE SCALE MRNA] (ISOFORM 2)</scope>
    <source>
        <tissue>Kidney</tissue>
    </source>
</reference>
<reference key="2">
    <citation type="submission" date="2017-12" db="EMBL/GenBank/DDBJ databases">
        <title>High-resolution comparative analysis of great ape genomes.</title>
        <authorList>
            <person name="Pollen A."/>
            <person name="Hastie A."/>
            <person name="Hormozdiari F."/>
            <person name="Dougherty M."/>
            <person name="Liu R."/>
            <person name="Chaisson M."/>
            <person name="Hoppe E."/>
            <person name="Hill C."/>
            <person name="Pang A."/>
            <person name="Hillier L."/>
            <person name="Baker C."/>
            <person name="Armstrong J."/>
            <person name="Shendure J."/>
            <person name="Paten B."/>
            <person name="Wilson R."/>
            <person name="Chao H."/>
            <person name="Schneider V."/>
            <person name="Ventura M."/>
            <person name="Kronenberg Z."/>
            <person name="Murali S."/>
            <person name="Gordon D."/>
            <person name="Cantsilieris S."/>
            <person name="Munson K."/>
            <person name="Nelson B."/>
            <person name="Raja A."/>
            <person name="Underwood J."/>
            <person name="Diekhans M."/>
            <person name="Fiddes I."/>
            <person name="Haussler D."/>
            <person name="Eichler E."/>
        </authorList>
    </citation>
    <scope>NUCLEOTIDE SEQUENCE [LARGE SCALE GENOMIC DNA]</scope>
</reference>